<keyword id="KW-0687">Ribonucleoprotein</keyword>
<keyword id="KW-0689">Ribosomal protein</keyword>
<keyword id="KW-0694">RNA-binding</keyword>
<keyword id="KW-0699">rRNA-binding</keyword>
<comment type="function">
    <text evidence="1">One of two assembly initiator proteins, it binds directly to the 5'-end of the 23S rRNA, where it nucleates assembly of the 50S subunit.</text>
</comment>
<comment type="function">
    <text evidence="1">One of the proteins that surrounds the polypeptide exit tunnel on the outside of the subunit.</text>
</comment>
<comment type="subunit">
    <text evidence="1">Part of the 50S ribosomal subunit.</text>
</comment>
<comment type="similarity">
    <text evidence="1">Belongs to the universal ribosomal protein uL24 family.</text>
</comment>
<proteinExistence type="inferred from homology"/>
<organism>
    <name type="scientific">Xylella fastidiosa (strain M23)</name>
    <dbReference type="NCBI Taxonomy" id="405441"/>
    <lineage>
        <taxon>Bacteria</taxon>
        <taxon>Pseudomonadati</taxon>
        <taxon>Pseudomonadota</taxon>
        <taxon>Gammaproteobacteria</taxon>
        <taxon>Lysobacterales</taxon>
        <taxon>Lysobacteraceae</taxon>
        <taxon>Xylella</taxon>
    </lineage>
</organism>
<feature type="chain" id="PRO_1000142056" description="Large ribosomal subunit protein uL24">
    <location>
        <begin position="1"/>
        <end position="105"/>
    </location>
</feature>
<gene>
    <name evidence="1" type="primary">rplX</name>
    <name type="ordered locus">XfasM23_0444</name>
</gene>
<accession>B2I8I0</accession>
<name>RL24_XYLF2</name>
<evidence type="ECO:0000255" key="1">
    <source>
        <dbReference type="HAMAP-Rule" id="MF_01326"/>
    </source>
</evidence>
<evidence type="ECO:0000305" key="2"/>
<protein>
    <recommendedName>
        <fullName evidence="1">Large ribosomal subunit protein uL24</fullName>
    </recommendedName>
    <alternativeName>
        <fullName evidence="2">50S ribosomal protein L24</fullName>
    </alternativeName>
</protein>
<sequence>MASRIKKGDQVIVIAGKDKGKQGEIIRIDGHRVVVSNVNFVKRHTKPNPQRGISGGLIDREAPIHVSNIKILNPMTGKGDRVGFKILGDGCKLRIFRSTGEVIGA</sequence>
<dbReference type="EMBL" id="CP001011">
    <property type="protein sequence ID" value="ACB91891.1"/>
    <property type="molecule type" value="Genomic_DNA"/>
</dbReference>
<dbReference type="RefSeq" id="WP_004090113.1">
    <property type="nucleotide sequence ID" value="NC_010577.1"/>
</dbReference>
<dbReference type="SMR" id="B2I8I0"/>
<dbReference type="GeneID" id="93904150"/>
<dbReference type="KEGG" id="xfn:XfasM23_0444"/>
<dbReference type="HOGENOM" id="CLU_093315_2_2_6"/>
<dbReference type="Proteomes" id="UP000001698">
    <property type="component" value="Chromosome"/>
</dbReference>
<dbReference type="GO" id="GO:1990904">
    <property type="term" value="C:ribonucleoprotein complex"/>
    <property type="evidence" value="ECO:0007669"/>
    <property type="project" value="UniProtKB-KW"/>
</dbReference>
<dbReference type="GO" id="GO:0005840">
    <property type="term" value="C:ribosome"/>
    <property type="evidence" value="ECO:0007669"/>
    <property type="project" value="UniProtKB-KW"/>
</dbReference>
<dbReference type="GO" id="GO:0019843">
    <property type="term" value="F:rRNA binding"/>
    <property type="evidence" value="ECO:0007669"/>
    <property type="project" value="UniProtKB-UniRule"/>
</dbReference>
<dbReference type="GO" id="GO:0003735">
    <property type="term" value="F:structural constituent of ribosome"/>
    <property type="evidence" value="ECO:0007669"/>
    <property type="project" value="InterPro"/>
</dbReference>
<dbReference type="GO" id="GO:0006412">
    <property type="term" value="P:translation"/>
    <property type="evidence" value="ECO:0007669"/>
    <property type="project" value="UniProtKB-UniRule"/>
</dbReference>
<dbReference type="CDD" id="cd06089">
    <property type="entry name" value="KOW_RPL26"/>
    <property type="match status" value="1"/>
</dbReference>
<dbReference type="FunFam" id="2.30.30.30:FF:000004">
    <property type="entry name" value="50S ribosomal protein L24"/>
    <property type="match status" value="1"/>
</dbReference>
<dbReference type="Gene3D" id="2.30.30.30">
    <property type="match status" value="1"/>
</dbReference>
<dbReference type="HAMAP" id="MF_01326_B">
    <property type="entry name" value="Ribosomal_uL24_B"/>
    <property type="match status" value="1"/>
</dbReference>
<dbReference type="InterPro" id="IPR005824">
    <property type="entry name" value="KOW"/>
</dbReference>
<dbReference type="InterPro" id="IPR014722">
    <property type="entry name" value="Rib_uL2_dom2"/>
</dbReference>
<dbReference type="InterPro" id="IPR003256">
    <property type="entry name" value="Ribosomal_uL24"/>
</dbReference>
<dbReference type="InterPro" id="IPR005825">
    <property type="entry name" value="Ribosomal_uL24_CS"/>
</dbReference>
<dbReference type="InterPro" id="IPR041988">
    <property type="entry name" value="Ribosomal_uL24_KOW"/>
</dbReference>
<dbReference type="InterPro" id="IPR008991">
    <property type="entry name" value="Translation_prot_SH3-like_sf"/>
</dbReference>
<dbReference type="NCBIfam" id="TIGR01079">
    <property type="entry name" value="rplX_bact"/>
    <property type="match status" value="1"/>
</dbReference>
<dbReference type="PANTHER" id="PTHR12903">
    <property type="entry name" value="MITOCHONDRIAL RIBOSOMAL PROTEIN L24"/>
    <property type="match status" value="1"/>
</dbReference>
<dbReference type="Pfam" id="PF00467">
    <property type="entry name" value="KOW"/>
    <property type="match status" value="1"/>
</dbReference>
<dbReference type="Pfam" id="PF17136">
    <property type="entry name" value="ribosomal_L24"/>
    <property type="match status" value="1"/>
</dbReference>
<dbReference type="SMART" id="SM00739">
    <property type="entry name" value="KOW"/>
    <property type="match status" value="1"/>
</dbReference>
<dbReference type="SUPFAM" id="SSF50104">
    <property type="entry name" value="Translation proteins SH3-like domain"/>
    <property type="match status" value="1"/>
</dbReference>
<dbReference type="PROSITE" id="PS01108">
    <property type="entry name" value="RIBOSOMAL_L24"/>
    <property type="match status" value="1"/>
</dbReference>
<reference key="1">
    <citation type="journal article" date="2010" name="J. Bacteriol.">
        <title>Whole genome sequences of two Xylella fastidiosa strains (M12 and M23) causing almond leaf scorch disease in California.</title>
        <authorList>
            <person name="Chen J."/>
            <person name="Xie G."/>
            <person name="Han S."/>
            <person name="Chertkov O."/>
            <person name="Sims D."/>
            <person name="Civerolo E.L."/>
        </authorList>
    </citation>
    <scope>NUCLEOTIDE SEQUENCE [LARGE SCALE GENOMIC DNA]</scope>
    <source>
        <strain>M23</strain>
    </source>
</reference>